<feature type="chain" id="PRO_1000070170" description="Membrane protein insertase YidC">
    <location>
        <begin position="1"/>
        <end position="542"/>
    </location>
</feature>
<feature type="transmembrane region" description="Helical" evidence="1">
    <location>
        <begin position="6"/>
        <end position="26"/>
    </location>
</feature>
<feature type="transmembrane region" description="Helical" evidence="1">
    <location>
        <begin position="326"/>
        <end position="346"/>
    </location>
</feature>
<feature type="transmembrane region" description="Helical" evidence="1">
    <location>
        <begin position="350"/>
        <end position="370"/>
    </location>
</feature>
<feature type="transmembrane region" description="Helical" evidence="1">
    <location>
        <begin position="421"/>
        <end position="441"/>
    </location>
</feature>
<feature type="transmembrane region" description="Helical" evidence="1">
    <location>
        <begin position="458"/>
        <end position="478"/>
    </location>
</feature>
<feature type="transmembrane region" description="Helical" evidence="1">
    <location>
        <begin position="501"/>
        <end position="521"/>
    </location>
</feature>
<reference key="1">
    <citation type="submission" date="2007-03" db="EMBL/GenBank/DDBJ databases">
        <title>Complete sequence of Shewanella loihica PV-4.</title>
        <authorList>
            <consortium name="US DOE Joint Genome Institute"/>
            <person name="Copeland A."/>
            <person name="Lucas S."/>
            <person name="Lapidus A."/>
            <person name="Barry K."/>
            <person name="Detter J.C."/>
            <person name="Glavina del Rio T."/>
            <person name="Hammon N."/>
            <person name="Israni S."/>
            <person name="Dalin E."/>
            <person name="Tice H."/>
            <person name="Pitluck S."/>
            <person name="Chain P."/>
            <person name="Malfatti S."/>
            <person name="Shin M."/>
            <person name="Vergez L."/>
            <person name="Schmutz J."/>
            <person name="Larimer F."/>
            <person name="Land M."/>
            <person name="Hauser L."/>
            <person name="Kyrpides N."/>
            <person name="Mikhailova N."/>
            <person name="Romine M.F."/>
            <person name="Serres G."/>
            <person name="Fredrickson J."/>
            <person name="Tiedje J."/>
            <person name="Richardson P."/>
        </authorList>
    </citation>
    <scope>NUCLEOTIDE SEQUENCE [LARGE SCALE GENOMIC DNA]</scope>
    <source>
        <strain>ATCC BAA-1088 / PV-4</strain>
    </source>
</reference>
<evidence type="ECO:0000255" key="1">
    <source>
        <dbReference type="HAMAP-Rule" id="MF_01810"/>
    </source>
</evidence>
<dbReference type="EMBL" id="CP000606">
    <property type="protein sequence ID" value="ABO25729.1"/>
    <property type="molecule type" value="Genomic_DNA"/>
</dbReference>
<dbReference type="RefSeq" id="WP_011867656.1">
    <property type="nucleotide sequence ID" value="NC_009092.1"/>
</dbReference>
<dbReference type="SMR" id="A3QJT1"/>
<dbReference type="STRING" id="323850.Shew_3866"/>
<dbReference type="KEGG" id="slo:Shew_3866"/>
<dbReference type="eggNOG" id="COG0706">
    <property type="taxonomic scope" value="Bacteria"/>
</dbReference>
<dbReference type="HOGENOM" id="CLU_016535_3_0_6"/>
<dbReference type="OrthoDB" id="9780552at2"/>
<dbReference type="Proteomes" id="UP000001558">
    <property type="component" value="Chromosome"/>
</dbReference>
<dbReference type="GO" id="GO:0005886">
    <property type="term" value="C:plasma membrane"/>
    <property type="evidence" value="ECO:0007669"/>
    <property type="project" value="UniProtKB-SubCell"/>
</dbReference>
<dbReference type="GO" id="GO:0032977">
    <property type="term" value="F:membrane insertase activity"/>
    <property type="evidence" value="ECO:0007669"/>
    <property type="project" value="InterPro"/>
</dbReference>
<dbReference type="GO" id="GO:0051205">
    <property type="term" value="P:protein insertion into membrane"/>
    <property type="evidence" value="ECO:0007669"/>
    <property type="project" value="TreeGrafter"/>
</dbReference>
<dbReference type="GO" id="GO:0015031">
    <property type="term" value="P:protein transport"/>
    <property type="evidence" value="ECO:0007669"/>
    <property type="project" value="UniProtKB-KW"/>
</dbReference>
<dbReference type="CDD" id="cd20070">
    <property type="entry name" value="5TM_YidC_Alb3"/>
    <property type="match status" value="1"/>
</dbReference>
<dbReference type="CDD" id="cd19961">
    <property type="entry name" value="EcYidC-like_peri"/>
    <property type="match status" value="1"/>
</dbReference>
<dbReference type="Gene3D" id="2.70.98.90">
    <property type="match status" value="1"/>
</dbReference>
<dbReference type="HAMAP" id="MF_01810">
    <property type="entry name" value="YidC_type1"/>
    <property type="match status" value="1"/>
</dbReference>
<dbReference type="InterPro" id="IPR019998">
    <property type="entry name" value="Membr_insert_YidC"/>
</dbReference>
<dbReference type="InterPro" id="IPR028053">
    <property type="entry name" value="Membr_insert_YidC_N"/>
</dbReference>
<dbReference type="InterPro" id="IPR001708">
    <property type="entry name" value="YidC/ALB3/OXA1/COX18"/>
</dbReference>
<dbReference type="InterPro" id="IPR028055">
    <property type="entry name" value="YidC/Oxa/ALB_C"/>
</dbReference>
<dbReference type="InterPro" id="IPR047196">
    <property type="entry name" value="YidC_ALB_C"/>
</dbReference>
<dbReference type="InterPro" id="IPR038221">
    <property type="entry name" value="YidC_periplasmic_sf"/>
</dbReference>
<dbReference type="NCBIfam" id="NF002351">
    <property type="entry name" value="PRK01318.1-1"/>
    <property type="match status" value="1"/>
</dbReference>
<dbReference type="NCBIfam" id="NF002352">
    <property type="entry name" value="PRK01318.1-3"/>
    <property type="match status" value="1"/>
</dbReference>
<dbReference type="NCBIfam" id="TIGR03593">
    <property type="entry name" value="yidC_nterm"/>
    <property type="match status" value="1"/>
</dbReference>
<dbReference type="NCBIfam" id="TIGR03592">
    <property type="entry name" value="yidC_oxa1_cterm"/>
    <property type="match status" value="1"/>
</dbReference>
<dbReference type="PANTHER" id="PTHR12428:SF65">
    <property type="entry name" value="CYTOCHROME C OXIDASE ASSEMBLY PROTEIN COX18, MITOCHONDRIAL"/>
    <property type="match status" value="1"/>
</dbReference>
<dbReference type="PANTHER" id="PTHR12428">
    <property type="entry name" value="OXA1"/>
    <property type="match status" value="1"/>
</dbReference>
<dbReference type="Pfam" id="PF02096">
    <property type="entry name" value="60KD_IMP"/>
    <property type="match status" value="1"/>
</dbReference>
<dbReference type="Pfam" id="PF14849">
    <property type="entry name" value="YidC_periplas"/>
    <property type="match status" value="1"/>
</dbReference>
<dbReference type="PRINTS" id="PR00701">
    <property type="entry name" value="60KDINNERMP"/>
</dbReference>
<dbReference type="PRINTS" id="PR01900">
    <property type="entry name" value="YIDCPROTEIN"/>
</dbReference>
<sequence>MESQRNILLIGLLFVSFLLWQQWQTDKNPQPVATESSVVASTVTDAHSADVPDADAALPEAVAASKELISVTTDQLTLKINPVGGDIVYSALVGHKLEQDKEEPFVLLQQTKDIYYISQSGLIGRNGIDSSTKGRAHFSSQSQAYTLADGQDTLEIPLTYVADNGVTYTKVFTLHRGKFDVGVEYRINNTSAEQLQVQMYGQIKHSIKKSESSMMMPTYRGAAFSTADTRYEKYSFEDMADKNLDKKTLGGWAAMLQHYFVSAWVPPANDQNTIFSSVSAGGLANIGFRGAVYDVAPGTQQTISAQFYVGPKDQEALSAISESLNLVVDYGFLWWLAIPIHWLLMFYQSFVGNWGVAIILITLTVRGMLYPLTKAQYTSMAKMRNLQPKLQDMKERFGDDRQKMGQAMMELYKKEKVNPMGGCLPILLQMPIFIALYWVLLESYELRHAPFMLWITDLSVQDPYYVLPLLMGVSMFLMQKMQPMAPTMDPMQQKMMQWMPVIFTVFFLWFPAGLVLYWLVGNLVAITQQKIIYAGLEKKGLK</sequence>
<accession>A3QJT1</accession>
<name>YIDC_SHELP</name>
<gene>
    <name evidence="1" type="primary">yidC</name>
    <name type="ordered locus">Shew_3866</name>
</gene>
<proteinExistence type="inferred from homology"/>
<keyword id="KW-0997">Cell inner membrane</keyword>
<keyword id="KW-1003">Cell membrane</keyword>
<keyword id="KW-0143">Chaperone</keyword>
<keyword id="KW-0472">Membrane</keyword>
<keyword id="KW-0653">Protein transport</keyword>
<keyword id="KW-1185">Reference proteome</keyword>
<keyword id="KW-0812">Transmembrane</keyword>
<keyword id="KW-1133">Transmembrane helix</keyword>
<keyword id="KW-0813">Transport</keyword>
<protein>
    <recommendedName>
        <fullName evidence="1">Membrane protein insertase YidC</fullName>
    </recommendedName>
    <alternativeName>
        <fullName evidence="1">Foldase YidC</fullName>
    </alternativeName>
    <alternativeName>
        <fullName evidence="1">Membrane integrase YidC</fullName>
    </alternativeName>
    <alternativeName>
        <fullName evidence="1">Membrane protein YidC</fullName>
    </alternativeName>
</protein>
<comment type="function">
    <text evidence="1">Required for the insertion and/or proper folding and/or complex formation of integral membrane proteins into the membrane. Involved in integration of membrane proteins that insert both dependently and independently of the Sec translocase complex, as well as at least some lipoproteins. Aids folding of multispanning membrane proteins.</text>
</comment>
<comment type="subunit">
    <text evidence="1">Interacts with the Sec translocase complex via SecD. Specifically interacts with transmembrane segments of nascent integral membrane proteins during membrane integration.</text>
</comment>
<comment type="subcellular location">
    <subcellularLocation>
        <location evidence="1">Cell inner membrane</location>
        <topology evidence="1">Multi-pass membrane protein</topology>
    </subcellularLocation>
</comment>
<comment type="similarity">
    <text evidence="1">Belongs to the OXA1/ALB3/YidC family. Type 1 subfamily.</text>
</comment>
<organism>
    <name type="scientific">Shewanella loihica (strain ATCC BAA-1088 / PV-4)</name>
    <dbReference type="NCBI Taxonomy" id="323850"/>
    <lineage>
        <taxon>Bacteria</taxon>
        <taxon>Pseudomonadati</taxon>
        <taxon>Pseudomonadota</taxon>
        <taxon>Gammaproteobacteria</taxon>
        <taxon>Alteromonadales</taxon>
        <taxon>Shewanellaceae</taxon>
        <taxon>Shewanella</taxon>
    </lineage>
</organism>